<dbReference type="EMBL" id="CU329672">
    <property type="protein sequence ID" value="CAB39903.1"/>
    <property type="molecule type" value="Genomic_DNA"/>
</dbReference>
<dbReference type="PIR" id="T41524">
    <property type="entry name" value="T41524"/>
</dbReference>
<dbReference type="RefSeq" id="NP_588116.1">
    <property type="nucleotide sequence ID" value="NM_001023106.2"/>
</dbReference>
<dbReference type="SMR" id="Q9Y7U6"/>
<dbReference type="BioGRID" id="276139">
    <property type="interactions" value="21"/>
</dbReference>
<dbReference type="FunCoup" id="Q9Y7U6">
    <property type="interactions" value="64"/>
</dbReference>
<dbReference type="STRING" id="284812.Q9Y7U6"/>
<dbReference type="iPTMnet" id="Q9Y7U6"/>
<dbReference type="PaxDb" id="4896-SPCC645.07.1"/>
<dbReference type="EnsemblFungi" id="SPCC645.07.1">
    <property type="protein sequence ID" value="SPCC645.07.1:pep"/>
    <property type="gene ID" value="SPCC645.07"/>
</dbReference>
<dbReference type="GeneID" id="2539580"/>
<dbReference type="KEGG" id="spo:2539580"/>
<dbReference type="PomBase" id="SPCC645.07">
    <property type="gene designation" value="rgf1"/>
</dbReference>
<dbReference type="VEuPathDB" id="FungiDB:SPCC645.07"/>
<dbReference type="eggNOG" id="KOG4305">
    <property type="taxonomic scope" value="Eukaryota"/>
</dbReference>
<dbReference type="HOGENOM" id="CLU_001251_2_1_1"/>
<dbReference type="InParanoid" id="Q9Y7U6"/>
<dbReference type="OMA" id="FAHVNDI"/>
<dbReference type="PhylomeDB" id="Q9Y7U6"/>
<dbReference type="PRO" id="PR:Q9Y7U6"/>
<dbReference type="Proteomes" id="UP000002485">
    <property type="component" value="Chromosome III"/>
</dbReference>
<dbReference type="GO" id="GO:0051285">
    <property type="term" value="C:cell cortex of cell tip"/>
    <property type="evidence" value="ECO:0000314"/>
    <property type="project" value="PomBase"/>
</dbReference>
<dbReference type="GO" id="GO:1902716">
    <property type="term" value="C:cell cortex of growing cell tip"/>
    <property type="evidence" value="ECO:0000314"/>
    <property type="project" value="PomBase"/>
</dbReference>
<dbReference type="GO" id="GO:0140472">
    <property type="term" value="C:cell cortex of non-growing cell tip"/>
    <property type="evidence" value="ECO:0000314"/>
    <property type="project" value="PomBase"/>
</dbReference>
<dbReference type="GO" id="GO:0032153">
    <property type="term" value="C:cell division site"/>
    <property type="evidence" value="ECO:0000314"/>
    <property type="project" value="PomBase"/>
</dbReference>
<dbReference type="GO" id="GO:0071944">
    <property type="term" value="C:cell periphery"/>
    <property type="evidence" value="ECO:0000318"/>
    <property type="project" value="GO_Central"/>
</dbReference>
<dbReference type="GO" id="GO:0051286">
    <property type="term" value="C:cell tip"/>
    <property type="evidence" value="ECO:0000314"/>
    <property type="project" value="PomBase"/>
</dbReference>
<dbReference type="GO" id="GO:0005737">
    <property type="term" value="C:cytoplasm"/>
    <property type="evidence" value="ECO:0000318"/>
    <property type="project" value="GO_Central"/>
</dbReference>
<dbReference type="GO" id="GO:0000935">
    <property type="term" value="C:division septum"/>
    <property type="evidence" value="ECO:0000314"/>
    <property type="project" value="PomBase"/>
</dbReference>
<dbReference type="GO" id="GO:0005634">
    <property type="term" value="C:nucleus"/>
    <property type="evidence" value="ECO:0000314"/>
    <property type="project" value="PomBase"/>
</dbReference>
<dbReference type="GO" id="GO:0005085">
    <property type="term" value="F:guanyl-nucleotide exchange factor activity"/>
    <property type="evidence" value="ECO:0000316"/>
    <property type="project" value="PomBase"/>
</dbReference>
<dbReference type="GO" id="GO:0070273">
    <property type="term" value="F:phosphatidylinositol-4-phosphate binding"/>
    <property type="evidence" value="ECO:0000314"/>
    <property type="project" value="PomBase"/>
</dbReference>
<dbReference type="GO" id="GO:0051523">
    <property type="term" value="P:cell growth mode switching, monopolar to bipolar"/>
    <property type="evidence" value="ECO:0000315"/>
    <property type="project" value="PomBase"/>
</dbReference>
<dbReference type="GO" id="GO:0030866">
    <property type="term" value="P:cortical actin cytoskeleton organization"/>
    <property type="evidence" value="ECO:0000315"/>
    <property type="project" value="PomBase"/>
</dbReference>
<dbReference type="GO" id="GO:0000917">
    <property type="term" value="P:division septum assembly"/>
    <property type="evidence" value="ECO:0007669"/>
    <property type="project" value="UniProtKB-KW"/>
</dbReference>
<dbReference type="GO" id="GO:0061245">
    <property type="term" value="P:establishment or maintenance of bipolar cell polarity"/>
    <property type="evidence" value="ECO:0000269"/>
    <property type="project" value="PomBase"/>
</dbReference>
<dbReference type="GO" id="GO:0009272">
    <property type="term" value="P:fungal-type cell wall biogenesis"/>
    <property type="evidence" value="ECO:0000316"/>
    <property type="project" value="PomBase"/>
</dbReference>
<dbReference type="GO" id="GO:1903139">
    <property type="term" value="P:positive regulation of cell integrity MAPK cascade"/>
    <property type="evidence" value="ECO:0000269"/>
    <property type="project" value="PomBase"/>
</dbReference>
<dbReference type="GO" id="GO:0090334">
    <property type="term" value="P:regulation of cell wall (1-&gt;3)-beta-D-glucan biosynthetic process"/>
    <property type="evidence" value="ECO:0000315"/>
    <property type="project" value="PomBase"/>
</dbReference>
<dbReference type="GO" id="GO:1903338">
    <property type="term" value="P:regulation of cell wall organization or biogenesis"/>
    <property type="evidence" value="ECO:0000269"/>
    <property type="project" value="PomBase"/>
</dbReference>
<dbReference type="GO" id="GO:0007264">
    <property type="term" value="P:small GTPase-mediated signal transduction"/>
    <property type="evidence" value="ECO:0000318"/>
    <property type="project" value="GO_Central"/>
</dbReference>
<dbReference type="CDD" id="cd04435">
    <property type="entry name" value="DEP_fRom2"/>
    <property type="match status" value="1"/>
</dbReference>
<dbReference type="CDD" id="cd00160">
    <property type="entry name" value="RhoGEF"/>
    <property type="match status" value="1"/>
</dbReference>
<dbReference type="FunFam" id="1.20.900.10:FF:000035">
    <property type="entry name" value="Rho guanyl nucleotide exchange factor"/>
    <property type="match status" value="1"/>
</dbReference>
<dbReference type="FunFam" id="2.30.29.30:FF:000405">
    <property type="entry name" value="RHO1 GDP-GTP exchange protein 2"/>
    <property type="match status" value="1"/>
</dbReference>
<dbReference type="Gene3D" id="1.20.900.10">
    <property type="entry name" value="Dbl homology (DH) domain"/>
    <property type="match status" value="1"/>
</dbReference>
<dbReference type="Gene3D" id="2.30.29.30">
    <property type="entry name" value="Pleckstrin-homology domain (PH domain)/Phosphotyrosine-binding domain (PTB)"/>
    <property type="match status" value="1"/>
</dbReference>
<dbReference type="Gene3D" id="1.10.10.10">
    <property type="entry name" value="Winged helix-like DNA-binding domain superfamily/Winged helix DNA-binding domain"/>
    <property type="match status" value="1"/>
</dbReference>
<dbReference type="InterPro" id="IPR001180">
    <property type="entry name" value="CNH_dom"/>
</dbReference>
<dbReference type="InterPro" id="IPR035899">
    <property type="entry name" value="DBL_dom_sf"/>
</dbReference>
<dbReference type="InterPro" id="IPR000591">
    <property type="entry name" value="DEP_dom"/>
</dbReference>
<dbReference type="InterPro" id="IPR000219">
    <property type="entry name" value="DH_dom"/>
</dbReference>
<dbReference type="InterPro" id="IPR011993">
    <property type="entry name" value="PH-like_dom_sf"/>
</dbReference>
<dbReference type="InterPro" id="IPR041675">
    <property type="entry name" value="PH_5"/>
</dbReference>
<dbReference type="InterPro" id="IPR001849">
    <property type="entry name" value="PH_domain"/>
</dbReference>
<dbReference type="InterPro" id="IPR052233">
    <property type="entry name" value="Rho-type_GEFs"/>
</dbReference>
<dbReference type="InterPro" id="IPR036388">
    <property type="entry name" value="WH-like_DNA-bd_sf"/>
</dbReference>
<dbReference type="InterPro" id="IPR036390">
    <property type="entry name" value="WH_DNA-bd_sf"/>
</dbReference>
<dbReference type="PANTHER" id="PTHR46572">
    <property type="entry name" value="RHO1 GDP-GTP EXCHANGE PROTEIN 1-RELATED"/>
    <property type="match status" value="1"/>
</dbReference>
<dbReference type="PANTHER" id="PTHR46572:SF2">
    <property type="entry name" value="RHO1 GDP-GTP EXCHANGE PROTEIN 1-RELATED"/>
    <property type="match status" value="1"/>
</dbReference>
<dbReference type="Pfam" id="PF00780">
    <property type="entry name" value="CNH"/>
    <property type="match status" value="1"/>
</dbReference>
<dbReference type="Pfam" id="PF00610">
    <property type="entry name" value="DEP"/>
    <property type="match status" value="1"/>
</dbReference>
<dbReference type="Pfam" id="PF15405">
    <property type="entry name" value="PH_5"/>
    <property type="match status" value="1"/>
</dbReference>
<dbReference type="Pfam" id="PF00621">
    <property type="entry name" value="RhoGEF"/>
    <property type="match status" value="1"/>
</dbReference>
<dbReference type="SMART" id="SM00036">
    <property type="entry name" value="CNH"/>
    <property type="match status" value="1"/>
</dbReference>
<dbReference type="SMART" id="SM00049">
    <property type="entry name" value="DEP"/>
    <property type="match status" value="1"/>
</dbReference>
<dbReference type="SMART" id="SM00233">
    <property type="entry name" value="PH"/>
    <property type="match status" value="1"/>
</dbReference>
<dbReference type="SMART" id="SM00325">
    <property type="entry name" value="RhoGEF"/>
    <property type="match status" value="1"/>
</dbReference>
<dbReference type="SUPFAM" id="SSF48065">
    <property type="entry name" value="DBL homology domain (DH-domain)"/>
    <property type="match status" value="1"/>
</dbReference>
<dbReference type="SUPFAM" id="SSF50729">
    <property type="entry name" value="PH domain-like"/>
    <property type="match status" value="1"/>
</dbReference>
<dbReference type="SUPFAM" id="SSF46785">
    <property type="entry name" value="Winged helix' DNA-binding domain"/>
    <property type="match status" value="1"/>
</dbReference>
<dbReference type="PROSITE" id="PS50219">
    <property type="entry name" value="CNH"/>
    <property type="match status" value="1"/>
</dbReference>
<dbReference type="PROSITE" id="PS50010">
    <property type="entry name" value="DH_2"/>
    <property type="match status" value="1"/>
</dbReference>
<dbReference type="PROSITE" id="PS50003">
    <property type="entry name" value="PH_DOMAIN"/>
    <property type="match status" value="1"/>
</dbReference>
<name>RGF1_SCHPO</name>
<comment type="function">
    <text evidence="5 6 7">Stimulates the exchange of Rho1 and Rho5 GDP-bound form into GTP-bound form. Controls septum formation, cell wall synthesis and localization of F-actin patches. Coordinates actin deposition with cell wall biosynthesis during bipolar growth.</text>
</comment>
<comment type="subcellular location">
    <subcellularLocation>
        <location evidence="5 6 7 8">Cytoplasm</location>
    </subcellularLocation>
    <text>Septum. Localizes to cell tips during interphase and the septum in mitotic cells.</text>
</comment>
<accession>Q9Y7U6</accession>
<gene>
    <name type="primary">rgf1</name>
    <name type="ORF">SPCC645.07</name>
</gene>
<evidence type="ECO:0000255" key="1">
    <source>
        <dbReference type="PROSITE-ProRule" id="PRU00062"/>
    </source>
</evidence>
<evidence type="ECO:0000255" key="2">
    <source>
        <dbReference type="PROSITE-ProRule" id="PRU00145"/>
    </source>
</evidence>
<evidence type="ECO:0000255" key="3">
    <source>
        <dbReference type="PROSITE-ProRule" id="PRU00795"/>
    </source>
</evidence>
<evidence type="ECO:0000256" key="4">
    <source>
        <dbReference type="SAM" id="MobiDB-lite"/>
    </source>
</evidence>
<evidence type="ECO:0000269" key="5">
    <source>
    </source>
</evidence>
<evidence type="ECO:0000269" key="6">
    <source>
    </source>
</evidence>
<evidence type="ECO:0000269" key="7">
    <source>
    </source>
</evidence>
<evidence type="ECO:0000269" key="8">
    <source>
    </source>
</evidence>
<evidence type="ECO:0000269" key="9">
    <source>
    </source>
</evidence>
<reference key="1">
    <citation type="journal article" date="2002" name="Nature">
        <title>The genome sequence of Schizosaccharomyces pombe.</title>
        <authorList>
            <person name="Wood V."/>
            <person name="Gwilliam R."/>
            <person name="Rajandream M.A."/>
            <person name="Lyne M.H."/>
            <person name="Lyne R."/>
            <person name="Stewart A."/>
            <person name="Sgouros J.G."/>
            <person name="Peat N."/>
            <person name="Hayles J."/>
            <person name="Baker S.G."/>
            <person name="Basham D."/>
            <person name="Bowman S."/>
            <person name="Brooks K."/>
            <person name="Brown D."/>
            <person name="Brown S."/>
            <person name="Chillingworth T."/>
            <person name="Churcher C.M."/>
            <person name="Collins M."/>
            <person name="Connor R."/>
            <person name="Cronin A."/>
            <person name="Davis P."/>
            <person name="Feltwell T."/>
            <person name="Fraser A."/>
            <person name="Gentles S."/>
            <person name="Goble A."/>
            <person name="Hamlin N."/>
            <person name="Harris D.E."/>
            <person name="Hidalgo J."/>
            <person name="Hodgson G."/>
            <person name="Holroyd S."/>
            <person name="Hornsby T."/>
            <person name="Howarth S."/>
            <person name="Huckle E.J."/>
            <person name="Hunt S."/>
            <person name="Jagels K."/>
            <person name="James K.D."/>
            <person name="Jones L."/>
            <person name="Jones M."/>
            <person name="Leather S."/>
            <person name="McDonald S."/>
            <person name="McLean J."/>
            <person name="Mooney P."/>
            <person name="Moule S."/>
            <person name="Mungall K.L."/>
            <person name="Murphy L.D."/>
            <person name="Niblett D."/>
            <person name="Odell C."/>
            <person name="Oliver K."/>
            <person name="O'Neil S."/>
            <person name="Pearson D."/>
            <person name="Quail M.A."/>
            <person name="Rabbinowitsch E."/>
            <person name="Rutherford K.M."/>
            <person name="Rutter S."/>
            <person name="Saunders D."/>
            <person name="Seeger K."/>
            <person name="Sharp S."/>
            <person name="Skelton J."/>
            <person name="Simmonds M.N."/>
            <person name="Squares R."/>
            <person name="Squares S."/>
            <person name="Stevens K."/>
            <person name="Taylor K."/>
            <person name="Taylor R.G."/>
            <person name="Tivey A."/>
            <person name="Walsh S.V."/>
            <person name="Warren T."/>
            <person name="Whitehead S."/>
            <person name="Woodward J.R."/>
            <person name="Volckaert G."/>
            <person name="Aert R."/>
            <person name="Robben J."/>
            <person name="Grymonprez B."/>
            <person name="Weltjens I."/>
            <person name="Vanstreels E."/>
            <person name="Rieger M."/>
            <person name="Schaefer M."/>
            <person name="Mueller-Auer S."/>
            <person name="Gabel C."/>
            <person name="Fuchs M."/>
            <person name="Duesterhoeft A."/>
            <person name="Fritzc C."/>
            <person name="Holzer E."/>
            <person name="Moestl D."/>
            <person name="Hilbert H."/>
            <person name="Borzym K."/>
            <person name="Langer I."/>
            <person name="Beck A."/>
            <person name="Lehrach H."/>
            <person name="Reinhardt R."/>
            <person name="Pohl T.M."/>
            <person name="Eger P."/>
            <person name="Zimmermann W."/>
            <person name="Wedler H."/>
            <person name="Wambutt R."/>
            <person name="Purnelle B."/>
            <person name="Goffeau A."/>
            <person name="Cadieu E."/>
            <person name="Dreano S."/>
            <person name="Gloux S."/>
            <person name="Lelaure V."/>
            <person name="Mottier S."/>
            <person name="Galibert F."/>
            <person name="Aves S.J."/>
            <person name="Xiang Z."/>
            <person name="Hunt C."/>
            <person name="Moore K."/>
            <person name="Hurst S.M."/>
            <person name="Lucas M."/>
            <person name="Rochet M."/>
            <person name="Gaillardin C."/>
            <person name="Tallada V.A."/>
            <person name="Garzon A."/>
            <person name="Thode G."/>
            <person name="Daga R.R."/>
            <person name="Cruzado L."/>
            <person name="Jimenez J."/>
            <person name="Sanchez M."/>
            <person name="del Rey F."/>
            <person name="Benito J."/>
            <person name="Dominguez A."/>
            <person name="Revuelta J.L."/>
            <person name="Moreno S."/>
            <person name="Armstrong J."/>
            <person name="Forsburg S.L."/>
            <person name="Cerutti L."/>
            <person name="Lowe T."/>
            <person name="McCombie W.R."/>
            <person name="Paulsen I."/>
            <person name="Potashkin J."/>
            <person name="Shpakovski G.V."/>
            <person name="Ussery D."/>
            <person name="Barrell B.G."/>
            <person name="Nurse P."/>
        </authorList>
    </citation>
    <scope>NUCLEOTIDE SEQUENCE [LARGE SCALE GENOMIC DNA]</scope>
    <source>
        <strain>972 / ATCC 24843</strain>
    </source>
</reference>
<reference key="2">
    <citation type="journal article" date="2005" name="Genes Cells">
        <title>Rho1-GEFs Rgf1 and Rgf2 are involved in formation of cell wall and septum, while Rgf3 is involved in cytokinesis in fission yeast.</title>
        <authorList>
            <person name="Mutoh T."/>
            <person name="Nakano K."/>
            <person name="Mabuchi I."/>
        </authorList>
    </citation>
    <scope>FUNCTION</scope>
    <scope>SUBCELLULAR LOCATION</scope>
</reference>
<reference key="3">
    <citation type="journal article" date="2005" name="J. Cell Sci.">
        <title>Cell wall remodeling at the fission yeast cell division site requires the Rho-GEF Rgf3p.</title>
        <authorList>
            <person name="Morrell-Falvey J.L."/>
            <person name="Ren L."/>
            <person name="Feoktistova A."/>
            <person name="Haese G.D."/>
            <person name="Gould K.L."/>
        </authorList>
    </citation>
    <scope>FUNCTION</scope>
    <scope>SUBCELLULAR LOCATION</scope>
</reference>
<reference key="4">
    <citation type="journal article" date="2006" name="Mol. Biol. Cell">
        <title>Rgf1p is a specific Rho1-GEF that coordinates cell polarization with cell wall biogenesis in fission yeast.</title>
        <authorList>
            <person name="Garcia P."/>
            <person name="Tajadura V."/>
            <person name="Garcia I."/>
            <person name="Sanchez Y."/>
        </authorList>
    </citation>
    <scope>FUNCTION</scope>
    <scope>SUBCELLULAR LOCATION</scope>
</reference>
<reference key="5">
    <citation type="journal article" date="2006" name="Nat. Biotechnol.">
        <title>ORFeome cloning and global analysis of protein localization in the fission yeast Schizosaccharomyces pombe.</title>
        <authorList>
            <person name="Matsuyama A."/>
            <person name="Arai R."/>
            <person name="Yashiroda Y."/>
            <person name="Shirai A."/>
            <person name="Kamata A."/>
            <person name="Sekido S."/>
            <person name="Kobayashi Y."/>
            <person name="Hashimoto A."/>
            <person name="Hamamoto M."/>
            <person name="Hiraoka Y."/>
            <person name="Horinouchi S."/>
            <person name="Yoshida M."/>
        </authorList>
    </citation>
    <scope>SUBCELLULAR LOCATION [LARGE SCALE ANALYSIS]</scope>
</reference>
<reference key="6">
    <citation type="journal article" date="2008" name="J. Proteome Res.">
        <title>Phosphoproteome analysis of fission yeast.</title>
        <authorList>
            <person name="Wilson-Grady J.T."/>
            <person name="Villen J."/>
            <person name="Gygi S.P."/>
        </authorList>
    </citation>
    <scope>PHOSPHORYLATION [LARGE SCALE ANALYSIS] AT SER-381</scope>
    <scope>IDENTIFICATION BY MASS SPECTROMETRY</scope>
</reference>
<feature type="chain" id="PRO_0000080970" description="Rho1 guanine nucleotide exchange factor 1">
    <location>
        <begin position="1"/>
        <end position="1334"/>
    </location>
</feature>
<feature type="domain" description="DH" evidence="1">
    <location>
        <begin position="621"/>
        <end position="808"/>
    </location>
</feature>
<feature type="domain" description="PH" evidence="2">
    <location>
        <begin position="843"/>
        <end position="973"/>
    </location>
</feature>
<feature type="domain" description="CNH" evidence="3">
    <location>
        <begin position="995"/>
        <end position="1293"/>
    </location>
</feature>
<feature type="region of interest" description="Disordered" evidence="4">
    <location>
        <begin position="1"/>
        <end position="89"/>
    </location>
</feature>
<feature type="region of interest" description="Disordered" evidence="4">
    <location>
        <begin position="135"/>
        <end position="182"/>
    </location>
</feature>
<feature type="region of interest" description="Disordered" evidence="4">
    <location>
        <begin position="203"/>
        <end position="245"/>
    </location>
</feature>
<feature type="region of interest" description="Disordered" evidence="4">
    <location>
        <begin position="381"/>
        <end position="402"/>
    </location>
</feature>
<feature type="compositionally biased region" description="Low complexity" evidence="4">
    <location>
        <begin position="138"/>
        <end position="149"/>
    </location>
</feature>
<feature type="compositionally biased region" description="Polar residues" evidence="4">
    <location>
        <begin position="150"/>
        <end position="164"/>
    </location>
</feature>
<feature type="compositionally biased region" description="Low complexity" evidence="4">
    <location>
        <begin position="170"/>
        <end position="180"/>
    </location>
</feature>
<feature type="compositionally biased region" description="Polar residues" evidence="4">
    <location>
        <begin position="213"/>
        <end position="227"/>
    </location>
</feature>
<feature type="compositionally biased region" description="Polar residues" evidence="4">
    <location>
        <begin position="234"/>
        <end position="245"/>
    </location>
</feature>
<feature type="compositionally biased region" description="Polar residues" evidence="4">
    <location>
        <begin position="381"/>
        <end position="400"/>
    </location>
</feature>
<feature type="modified residue" description="Phosphoserine" evidence="9">
    <location>
        <position position="381"/>
    </location>
</feature>
<sequence length="1334" mass="150114">MDYRHPNALGVNESSRAYEEIFGAPRKREPARTVSTPAFMEPAPVSKKPLPPPTRRLPRKPLPFRSTSLQPPSSQPPAPPTHQREASPVKNIEHSESFPSVFGTSNNHQIVPLTLKDGNDFGALYASLNTTPHFPQVSNHAPNNSNSPSLTWHTSSGDDSNQNPFFVRRQSQSSTSPVSDSVDENLLSAVSSVTESVETNLHLDQNYPYGSPVRSSKNPFLSSNSRLPTDDSSHTVGSHSFTSGTHPPIVSSNSAFTLPNAVTPAAQAPLIRSVSEYPANVSPPAQSLQLPKSTSNPADLHLSIASASSHKNIFSGLDVFSNVFHGPSTTLRDREHDMRNRSFDHSTLAHYEAVKQQRLGVEPTARSFTLSSYKSRASGNSLINDRSSTTTPTFVNSEASSPVHKNKRRRRIYAALLSRVASELLDRLQLGDITKDGLIYSNAFTGDHAVTVLMGIIHTSDRNLALLVGRSLDAQKFIHDVTYDHRLRDSHREIYQLQGTGYRPFLRANDNASINNKNHHKELEDNESGTRISPSTLGDTSFPNGIFTLLTHCYSPTCAKDHPCYSISCPRRLEQQHRLFAKMRANTEQSSSLAFDDKEQKLWIHSVPQEIAYSVSDRERKRQEVICEVIYTERDFVKDLEYLRDYWIKPLWASSCIPERKKEKFIRTVFLNALEVQAVNSKLAEALTKRQNYKPIVDNIADIFLEHVPKFEPFIRYGAGQLYGKYEFEKEKSSNPAFAKFVSDVERLKESRKLELNGYLTKPTTRLARYPLLLEAVLKYTDEGNPDKQDIPKVINIVRGFLSRLNVESGKAENKFNLFHLNQQLVFKPGEHYDLHLLDANRQLIFKGPLKKRSAGSTSSESASDVTLFLFDHALLIVKPKTINKRELLKVFQRPIPLLLLQLFLVDDNGLRIPYSSKQQLAAVSKAANGKPPSRFYPFSLQLLGRRGYEITLYATTEVSRDKWLEHIDNQQTLLQHRNQWFESVTICSNFFVGDNKVNAIGVYDSGRRLLYGTDTGVYVSLRKANSPLQFKPVRALNIPNISQLEVIEEYSLLLLLSDKVLYSYPLEMIDADTTQAPKKARKVSGHTTFFRVGICLGKVLVCAVKSSVLSATIKVFEPVTNYSKTRNMPSLKKFLTVNQDPLRIVKELYIPTESTSVHFLKNKLCVGCTRGFEVVSLDNLETQSLLDPADTSLEFVEKKENVKPIAIYRMNGGEFLLCYSQFAFYVNRDGWRSRPTWFVVWEGSPQNFALSYPYILAFEPTFIEIRHVETSELIHVISGRNIRLLADGRGKLGDGGEIFYACDQRGENCETSVVCSLRLTSAAAHAKEQHVDK</sequence>
<keyword id="KW-0131">Cell cycle</keyword>
<keyword id="KW-0132">Cell division</keyword>
<keyword id="KW-0963">Cytoplasm</keyword>
<keyword id="KW-0344">Guanine-nucleotide releasing factor</keyword>
<keyword id="KW-0597">Phosphoprotein</keyword>
<keyword id="KW-1185">Reference proteome</keyword>
<keyword id="KW-0717">Septation</keyword>
<proteinExistence type="evidence at protein level"/>
<protein>
    <recommendedName>
        <fullName>Rho1 guanine nucleotide exchange factor 1</fullName>
    </recommendedName>
</protein>
<organism>
    <name type="scientific">Schizosaccharomyces pombe (strain 972 / ATCC 24843)</name>
    <name type="common">Fission yeast</name>
    <dbReference type="NCBI Taxonomy" id="284812"/>
    <lineage>
        <taxon>Eukaryota</taxon>
        <taxon>Fungi</taxon>
        <taxon>Dikarya</taxon>
        <taxon>Ascomycota</taxon>
        <taxon>Taphrinomycotina</taxon>
        <taxon>Schizosaccharomycetes</taxon>
        <taxon>Schizosaccharomycetales</taxon>
        <taxon>Schizosaccharomycetaceae</taxon>
        <taxon>Schizosaccharomyces</taxon>
    </lineage>
</organism>